<gene>
    <name type="primary">fam76b</name>
</gene>
<organism>
    <name type="scientific">Xenopus laevis</name>
    <name type="common">African clawed frog</name>
    <dbReference type="NCBI Taxonomy" id="8355"/>
    <lineage>
        <taxon>Eukaryota</taxon>
        <taxon>Metazoa</taxon>
        <taxon>Chordata</taxon>
        <taxon>Craniata</taxon>
        <taxon>Vertebrata</taxon>
        <taxon>Euteleostomi</taxon>
        <taxon>Amphibia</taxon>
        <taxon>Batrachia</taxon>
        <taxon>Anura</taxon>
        <taxon>Pipoidea</taxon>
        <taxon>Pipidae</taxon>
        <taxon>Xenopodinae</taxon>
        <taxon>Xenopus</taxon>
        <taxon>Xenopus</taxon>
    </lineage>
</organism>
<accession>Q6DEE7</accession>
<comment type="function">
    <text evidence="1">Plays a role in hematopoiesis and immune system development, and participates in the inflammatory response.</text>
</comment>
<comment type="similarity">
    <text evidence="4">Belongs to the FAM76 family.</text>
</comment>
<protein>
    <recommendedName>
        <fullName>Protein FAM76B</fullName>
    </recommendedName>
</protein>
<proteinExistence type="evidence at transcript level"/>
<evidence type="ECO:0000250" key="1">
    <source>
        <dbReference type="UniProtKB" id="Q6PBM7"/>
    </source>
</evidence>
<evidence type="ECO:0000255" key="2"/>
<evidence type="ECO:0000256" key="3">
    <source>
        <dbReference type="SAM" id="MobiDB-lite"/>
    </source>
</evidence>
<evidence type="ECO:0000305" key="4"/>
<sequence length="337" mass="38600">MASALYACTKCHQRYPFEELSQGQQLCKECRIAHPIVKCTYCRSEFQQESKTNTICKKCAQNVKQFGTPKPCQYCNIIAAFIGTKCQRCTNSEKKYGPPQTCEQCKQQCAFDRKEEGRRKVDGKLLCWLCTLSYKRVLQKTKEQRKSLGSTHSNSSSSSLTEKDQHHSKHHHHHHHHHRHSSSHHKISSLSPEPEQGIWKQSHKSSTVIQNETPKKKPKLEFKPSNGDSSSINQSTDSGGTDNFVLISQLKEEVMSLKRLLQQRDQTILEKDKKLTELKADFQYQENNLRTKMNGMDKAHKDFVEQLQGKNRELLKQVAALSKGKKFDKSGSILTSP</sequence>
<keyword id="KW-0175">Coiled coil</keyword>
<keyword id="KW-1185">Reference proteome</keyword>
<dbReference type="EMBL" id="BC077175">
    <property type="protein sequence ID" value="AAH77175.1"/>
    <property type="molecule type" value="mRNA"/>
</dbReference>
<dbReference type="RefSeq" id="NP_001086610.1">
    <property type="nucleotide sequence ID" value="NM_001093141.1"/>
</dbReference>
<dbReference type="SMR" id="Q6DEE7"/>
<dbReference type="DNASU" id="446445"/>
<dbReference type="GeneID" id="446445"/>
<dbReference type="KEGG" id="xla:446445"/>
<dbReference type="AGR" id="Xenbase:XB-GENE-5850885"/>
<dbReference type="CTD" id="446445"/>
<dbReference type="Xenbase" id="XB-GENE-5850885">
    <property type="gene designation" value="fam76b.S"/>
</dbReference>
<dbReference type="OMA" id="CACAYKR"/>
<dbReference type="OrthoDB" id="3689at2759"/>
<dbReference type="Proteomes" id="UP000186698">
    <property type="component" value="Chromosome 2S"/>
</dbReference>
<dbReference type="Bgee" id="446445">
    <property type="expression patterns" value="Expressed in blastula and 19 other cell types or tissues"/>
</dbReference>
<dbReference type="GO" id="GO:0016607">
    <property type="term" value="C:nuclear speck"/>
    <property type="evidence" value="ECO:0000250"/>
    <property type="project" value="UniProtKB"/>
</dbReference>
<dbReference type="InterPro" id="IPR032017">
    <property type="entry name" value="FAM76"/>
</dbReference>
<dbReference type="PANTHER" id="PTHR46176">
    <property type="entry name" value="LD21662P"/>
    <property type="match status" value="1"/>
</dbReference>
<dbReference type="PANTHER" id="PTHR46176:SF3">
    <property type="entry name" value="PROTEIN FAM76B"/>
    <property type="match status" value="1"/>
</dbReference>
<dbReference type="Pfam" id="PF16046">
    <property type="entry name" value="FAM76"/>
    <property type="match status" value="1"/>
</dbReference>
<feature type="chain" id="PRO_0000245766" description="Protein FAM76B">
    <location>
        <begin position="1"/>
        <end position="337"/>
    </location>
</feature>
<feature type="region of interest" description="Disordered" evidence="3">
    <location>
        <begin position="143"/>
        <end position="241"/>
    </location>
</feature>
<feature type="coiled-coil region" evidence="2">
    <location>
        <begin position="301"/>
        <end position="326"/>
    </location>
</feature>
<feature type="compositionally biased region" description="Low complexity" evidence="3">
    <location>
        <begin position="147"/>
        <end position="159"/>
    </location>
</feature>
<feature type="compositionally biased region" description="Basic residues" evidence="3">
    <location>
        <begin position="166"/>
        <end position="187"/>
    </location>
</feature>
<feature type="compositionally biased region" description="Basic and acidic residues" evidence="3">
    <location>
        <begin position="213"/>
        <end position="222"/>
    </location>
</feature>
<feature type="compositionally biased region" description="Polar residues" evidence="3">
    <location>
        <begin position="226"/>
        <end position="241"/>
    </location>
</feature>
<name>FA76B_XENLA</name>
<reference key="1">
    <citation type="submission" date="2004-07" db="EMBL/GenBank/DDBJ databases">
        <authorList>
            <consortium name="NIH - Xenopus Gene Collection (XGC) project"/>
        </authorList>
    </citation>
    <scope>NUCLEOTIDE SEQUENCE [LARGE SCALE MRNA]</scope>
    <source>
        <tissue>Embryo</tissue>
    </source>
</reference>